<sequence>MSSISDLVNLNLSDSTERVIAEYIWVGGSGMDMRSKARTLSGPVKDPSKLPKWNYDGSSTGQAPGQDSEVILYPQTIFRDPFRRGNNILVMCDAYTPAGEPIPTNKRHNAAKIFSNPEVVAEEPWYGIEQEYTLLQKDVQWPVGWPLGGFPGPQGPYYCGIGANKAFGRDIVDSHYKACLYAGINISGINGEVMPGQWEFQVGPSVGISAADELWVARYILERITEIAGVVLSFDPKPIQGDWNGAGAHTNYSTKSMRNDGGYEVIKKAITKLEKRHKEHIAAYGEGNERRLTGKHETADMNTFIWGVANRGASIRVGRDTEKAGKGYFEDRRPASNMDPYVVTSMIAETTLLWKP</sequence>
<gene>
    <name type="primary">Gln-gamma</name>
</gene>
<dbReference type="EC" id="6.3.1.2"/>
<dbReference type="EMBL" id="X14605">
    <property type="protein sequence ID" value="CAA32759.1"/>
    <property type="molecule type" value="mRNA"/>
</dbReference>
<dbReference type="EMBL" id="M10159">
    <property type="protein sequence ID" value="AAA33762.1"/>
    <property type="molecule type" value="mRNA"/>
</dbReference>
<dbReference type="EMBL" id="M92095">
    <property type="protein sequence ID" value="AAA33761.1"/>
    <property type="molecule type" value="Genomic_DNA"/>
</dbReference>
<dbReference type="PIR" id="S04727">
    <property type="entry name" value="AJFBQ"/>
</dbReference>
<dbReference type="RefSeq" id="XP_007141923.1">
    <property type="nucleotide sequence ID" value="XM_007141861.1"/>
</dbReference>
<dbReference type="SMR" id="P00965"/>
<dbReference type="ProMEX" id="P00965"/>
<dbReference type="EnsemblPlants" id="ESW13917">
    <property type="protein sequence ID" value="ESW13917"/>
    <property type="gene ID" value="PHAVU_008G237400g"/>
</dbReference>
<dbReference type="Gramene" id="ESW13917">
    <property type="protein sequence ID" value="ESW13917"/>
    <property type="gene ID" value="PHAVU_008G237400g"/>
</dbReference>
<dbReference type="eggNOG" id="KOG0683">
    <property type="taxonomic scope" value="Eukaryota"/>
</dbReference>
<dbReference type="OMA" id="CAIGANK"/>
<dbReference type="OrthoDB" id="1936100at2759"/>
<dbReference type="PhylomeDB" id="P00965"/>
<dbReference type="GO" id="GO:0005737">
    <property type="term" value="C:cytoplasm"/>
    <property type="evidence" value="ECO:0007669"/>
    <property type="project" value="UniProtKB-SubCell"/>
</dbReference>
<dbReference type="GO" id="GO:0005524">
    <property type="term" value="F:ATP binding"/>
    <property type="evidence" value="ECO:0007669"/>
    <property type="project" value="UniProtKB-KW"/>
</dbReference>
<dbReference type="GO" id="GO:0004356">
    <property type="term" value="F:glutamine synthetase activity"/>
    <property type="evidence" value="ECO:0007669"/>
    <property type="project" value="UniProtKB-EC"/>
</dbReference>
<dbReference type="GO" id="GO:0006542">
    <property type="term" value="P:glutamine biosynthetic process"/>
    <property type="evidence" value="ECO:0007669"/>
    <property type="project" value="InterPro"/>
</dbReference>
<dbReference type="FunFam" id="3.30.590.10:FF:000004">
    <property type="entry name" value="Glutamine synthetase"/>
    <property type="match status" value="1"/>
</dbReference>
<dbReference type="FunFam" id="3.10.20.70:FF:000003">
    <property type="entry name" value="Glutamine synthetase, chloroplastic"/>
    <property type="match status" value="1"/>
</dbReference>
<dbReference type="Gene3D" id="3.10.20.70">
    <property type="entry name" value="Glutamine synthetase, N-terminal domain"/>
    <property type="match status" value="1"/>
</dbReference>
<dbReference type="Gene3D" id="3.30.590.10">
    <property type="entry name" value="Glutamine synthetase/guanido kinase, catalytic domain"/>
    <property type="match status" value="1"/>
</dbReference>
<dbReference type="InterPro" id="IPR008147">
    <property type="entry name" value="Gln_synt_N"/>
</dbReference>
<dbReference type="InterPro" id="IPR036651">
    <property type="entry name" value="Gln_synt_N_sf"/>
</dbReference>
<dbReference type="InterPro" id="IPR014746">
    <property type="entry name" value="Gln_synth/guanido_kin_cat_dom"/>
</dbReference>
<dbReference type="InterPro" id="IPR008146">
    <property type="entry name" value="Gln_synth_cat_dom"/>
</dbReference>
<dbReference type="InterPro" id="IPR027303">
    <property type="entry name" value="Gln_synth_gly_rich_site"/>
</dbReference>
<dbReference type="InterPro" id="IPR027302">
    <property type="entry name" value="Gln_synth_N_conserv_site"/>
</dbReference>
<dbReference type="InterPro" id="IPR050292">
    <property type="entry name" value="Glutamine_Synthetase"/>
</dbReference>
<dbReference type="PANTHER" id="PTHR20852">
    <property type="entry name" value="GLUTAMINE SYNTHETASE"/>
    <property type="match status" value="1"/>
</dbReference>
<dbReference type="PANTHER" id="PTHR20852:SF93">
    <property type="entry name" value="GLUTAMINE SYNTHETASE CYTOSOLIC ISOZYME 1-1"/>
    <property type="match status" value="1"/>
</dbReference>
<dbReference type="Pfam" id="PF00120">
    <property type="entry name" value="Gln-synt_C"/>
    <property type="match status" value="1"/>
</dbReference>
<dbReference type="Pfam" id="PF03951">
    <property type="entry name" value="Gln-synt_N"/>
    <property type="match status" value="1"/>
</dbReference>
<dbReference type="SMART" id="SM01230">
    <property type="entry name" value="Gln-synt_C"/>
    <property type="match status" value="1"/>
</dbReference>
<dbReference type="SUPFAM" id="SSF54368">
    <property type="entry name" value="Glutamine synthetase, N-terminal domain"/>
    <property type="match status" value="1"/>
</dbReference>
<dbReference type="SUPFAM" id="SSF55931">
    <property type="entry name" value="Glutamine synthetase/guanido kinase"/>
    <property type="match status" value="1"/>
</dbReference>
<dbReference type="PROSITE" id="PS00180">
    <property type="entry name" value="GLNA_1"/>
    <property type="match status" value="1"/>
</dbReference>
<dbReference type="PROSITE" id="PS00181">
    <property type="entry name" value="GLNA_ATP"/>
    <property type="match status" value="1"/>
</dbReference>
<dbReference type="PROSITE" id="PS51986">
    <property type="entry name" value="GS_BETA_GRASP"/>
    <property type="match status" value="1"/>
</dbReference>
<dbReference type="PROSITE" id="PS51987">
    <property type="entry name" value="GS_CATALYTIC"/>
    <property type="match status" value="1"/>
</dbReference>
<name>GLNA3_PHAVU</name>
<keyword id="KW-0067">ATP-binding</keyword>
<keyword id="KW-0963">Cytoplasm</keyword>
<keyword id="KW-0436">Ligase</keyword>
<keyword id="KW-0535">Nitrogen fixation</keyword>
<keyword id="KW-0547">Nucleotide-binding</keyword>
<proteinExistence type="evidence at transcript level"/>
<feature type="chain" id="PRO_0000153193" description="Glutamine synthetase N-1">
    <location>
        <begin position="1"/>
        <end position="356"/>
    </location>
</feature>
<feature type="domain" description="GS beta-grasp" evidence="1">
    <location>
        <begin position="19"/>
        <end position="99"/>
    </location>
</feature>
<feature type="domain" description="GS catalytic" evidence="2">
    <location>
        <begin position="106"/>
        <end position="356"/>
    </location>
</feature>
<comment type="catalytic activity">
    <reaction>
        <text>L-glutamate + NH4(+) + ATP = L-glutamine + ADP + phosphate + H(+)</text>
        <dbReference type="Rhea" id="RHEA:16169"/>
        <dbReference type="ChEBI" id="CHEBI:15378"/>
        <dbReference type="ChEBI" id="CHEBI:28938"/>
        <dbReference type="ChEBI" id="CHEBI:29985"/>
        <dbReference type="ChEBI" id="CHEBI:30616"/>
        <dbReference type="ChEBI" id="CHEBI:43474"/>
        <dbReference type="ChEBI" id="CHEBI:58359"/>
        <dbReference type="ChEBI" id="CHEBI:456216"/>
        <dbReference type="EC" id="6.3.1.2"/>
    </reaction>
</comment>
<comment type="subunit">
    <text>Homooctamer.</text>
</comment>
<comment type="subcellular location">
    <subcellularLocation>
        <location>Cytoplasm</location>
    </subcellularLocation>
</comment>
<comment type="tissue specificity">
    <text>This is a nodule isozyme.</text>
</comment>
<comment type="miscellaneous">
    <text>There are at least four isozymes of this enzyme in P.vulgaris.</text>
</comment>
<comment type="miscellaneous">
    <text>Irreversibly inhibited by the herbicide L-phosphinothricin (PPT).</text>
</comment>
<comment type="similarity">
    <text evidence="3">Belongs to the glutamine synthetase family.</text>
</comment>
<protein>
    <recommendedName>
        <fullName>Glutamine synthetase N-1</fullName>
        <ecNumber>6.3.1.2</ecNumber>
    </recommendedName>
    <alternativeName>
        <fullName>Gln isozyme gamma</fullName>
    </alternativeName>
    <alternativeName>
        <fullName>Glutamate--ammonia ligase</fullName>
    </alternativeName>
</protein>
<reference key="1">
    <citation type="journal article" date="1989" name="Plant Mol. Biol.">
        <title>cDNA sequence and differential expression of the gene encoding the glutamine synthetase and polypeptide of Phaseolus vulgaris L.</title>
        <authorList>
            <person name="Bennett M.J."/>
            <person name="Lightfoot D.A."/>
            <person name="Cullimore J.V."/>
        </authorList>
    </citation>
    <scope>NUCLEOTIDE SEQUENCE</scope>
    <source>
        <tissue>Root nodule</tissue>
    </source>
</reference>
<reference key="2">
    <citation type="journal article" date="1984" name="J. Mol. Appl. Genet.">
        <title>Glutamine synthetase of Phaseolus vulgaris L.: organ-specific expression of a multigene family.</title>
        <authorList>
            <person name="Cullimore J.V."/>
            <person name="Gebhardt C."/>
            <person name="Saarelainen R."/>
            <person name="Miflin B.J."/>
            <person name="Idler K.B."/>
            <person name="Barker R.F."/>
        </authorList>
    </citation>
    <scope>NUCLEOTIDE SEQUENCE [MRNA] OF 216-356</scope>
</reference>
<reference key="3">
    <citation type="journal article" date="1990" name="Plant Cell">
        <title>Nuclear factors interact with conserved A/T-rich elements upstream of a nodule-enhanced glutamine synthetase gene from French bean.</title>
        <authorList>
            <person name="Forde B.G."/>
            <person name="Freeman J."/>
            <person name="Oliver J.E."/>
            <person name="Pineda M."/>
        </authorList>
    </citation>
    <scope>NUCLEOTIDE SEQUENCE OF 1-38</scope>
</reference>
<accession>P00965</accession>
<accession>Q9SAT5</accession>
<evidence type="ECO:0000255" key="1">
    <source>
        <dbReference type="PROSITE-ProRule" id="PRU01330"/>
    </source>
</evidence>
<evidence type="ECO:0000255" key="2">
    <source>
        <dbReference type="PROSITE-ProRule" id="PRU01331"/>
    </source>
</evidence>
<evidence type="ECO:0000305" key="3"/>
<organism>
    <name type="scientific">Phaseolus vulgaris</name>
    <name type="common">Kidney bean</name>
    <name type="synonym">French bean</name>
    <dbReference type="NCBI Taxonomy" id="3885"/>
    <lineage>
        <taxon>Eukaryota</taxon>
        <taxon>Viridiplantae</taxon>
        <taxon>Streptophyta</taxon>
        <taxon>Embryophyta</taxon>
        <taxon>Tracheophyta</taxon>
        <taxon>Spermatophyta</taxon>
        <taxon>Magnoliopsida</taxon>
        <taxon>eudicotyledons</taxon>
        <taxon>Gunneridae</taxon>
        <taxon>Pentapetalae</taxon>
        <taxon>rosids</taxon>
        <taxon>fabids</taxon>
        <taxon>Fabales</taxon>
        <taxon>Fabaceae</taxon>
        <taxon>Papilionoideae</taxon>
        <taxon>50 kb inversion clade</taxon>
        <taxon>NPAAA clade</taxon>
        <taxon>indigoferoid/millettioid clade</taxon>
        <taxon>Phaseoleae</taxon>
        <taxon>Phaseolus</taxon>
    </lineage>
</organism>